<name>NU5C_CAPBA</name>
<keyword id="KW-0150">Chloroplast</keyword>
<keyword id="KW-0472">Membrane</keyword>
<keyword id="KW-0520">NAD</keyword>
<keyword id="KW-0521">NADP</keyword>
<keyword id="KW-0934">Plastid</keyword>
<keyword id="KW-0618">Plastoquinone</keyword>
<keyword id="KW-0874">Quinone</keyword>
<keyword id="KW-0793">Thylakoid</keyword>
<keyword id="KW-1278">Translocase</keyword>
<keyword id="KW-0812">Transmembrane</keyword>
<keyword id="KW-1133">Transmembrane helix</keyword>
<keyword id="KW-0813">Transport</keyword>
<evidence type="ECO:0000250" key="1"/>
<evidence type="ECO:0000255" key="2"/>
<evidence type="ECO:0000305" key="3"/>
<sequence length="695" mass="78712">WIIPFIPLPVPILIGAGLILFPTATKSFRRMWAFQSVLLLSIVMIFSIYLSIQQINSSSFSQYVWSWIINNDFSLDFGYLIDPLTSIMXXLITTVGIMVLIYSDNYMAHDQGYLRFFAYMSFFSTSMLGLVTSSNLIQIYIFWELVGLCSYLLIGFWFTRPVAANACQKAFVTNRVGDFGLLLGILGFYWITGSFEFRDLFEIFNNLIYNNEVNFLFVTLCAVLLFVGAVAKSAQFPLHVWLPDAMEGPTPISALIHAATMVAAGIFLVARLLPLFRVIPYIMYLISIIGIITVLLGATLALAQKDIKRGLAYSTMSQLGYMMLALGMGSYRSALFHLITHAYSKALLFLGSGSIIHSMETIVGYSPAKSQNMGLMGGLRKHVPITKITFLLGTLSLCGIPPLACFWSKDEILNDSWLYSPIFAIIAWATAGLTAFYMFRIYLLTFEGHLNVHFQNYGGKHKTPFYSISLWGKNGIKKNSCLLTMNNNESTYFFSKTKYPIDKNERKMTRPFMTIAHFERKAVYSYPYESDNTMLFPIFVLGLFTLFVGSIGIPFNQDGVNLDILSKWLAPSINLLHQKSNNSMDWNEFLKDAVLSVSIAYFGIFIASFLYKPIYSSLKNLELINFFVKKGPKRILWDKIINGIYDWSYNRAYIDAFYTRFLVGGIRGLAEFTHFFDRRVIDGMTNGVGVISFIV</sequence>
<dbReference type="EC" id="7.1.1.-"/>
<dbReference type="EMBL" id="U08916">
    <property type="protein sequence ID" value="AAA18598.1"/>
    <property type="molecule type" value="Genomic_DNA"/>
</dbReference>
<dbReference type="GO" id="GO:0009535">
    <property type="term" value="C:chloroplast thylakoid membrane"/>
    <property type="evidence" value="ECO:0007669"/>
    <property type="project" value="UniProtKB-SubCell"/>
</dbReference>
<dbReference type="GO" id="GO:0008137">
    <property type="term" value="F:NADH dehydrogenase (ubiquinone) activity"/>
    <property type="evidence" value="ECO:0007669"/>
    <property type="project" value="InterPro"/>
</dbReference>
<dbReference type="GO" id="GO:0048038">
    <property type="term" value="F:quinone binding"/>
    <property type="evidence" value="ECO:0007669"/>
    <property type="project" value="UniProtKB-KW"/>
</dbReference>
<dbReference type="GO" id="GO:0042773">
    <property type="term" value="P:ATP synthesis coupled electron transport"/>
    <property type="evidence" value="ECO:0007669"/>
    <property type="project" value="InterPro"/>
</dbReference>
<dbReference type="GO" id="GO:0015990">
    <property type="term" value="P:electron transport coupled proton transport"/>
    <property type="evidence" value="ECO:0007669"/>
    <property type="project" value="TreeGrafter"/>
</dbReference>
<dbReference type="Gene3D" id="1.20.5.2700">
    <property type="match status" value="1"/>
</dbReference>
<dbReference type="InterPro" id="IPR002128">
    <property type="entry name" value="NADH_UbQ_OxRdtase_chlpt_su5_C"/>
</dbReference>
<dbReference type="InterPro" id="IPR018393">
    <property type="entry name" value="NADHpl_OxRdtase_5_subgr"/>
</dbReference>
<dbReference type="InterPro" id="IPR001750">
    <property type="entry name" value="ND/Mrp_TM"/>
</dbReference>
<dbReference type="InterPro" id="IPR003945">
    <property type="entry name" value="NU5C-like"/>
</dbReference>
<dbReference type="InterPro" id="IPR001516">
    <property type="entry name" value="Proton_antipo_N"/>
</dbReference>
<dbReference type="NCBIfam" id="TIGR01974">
    <property type="entry name" value="NDH_I_L"/>
    <property type="match status" value="1"/>
</dbReference>
<dbReference type="NCBIfam" id="NF005141">
    <property type="entry name" value="PRK06590.1"/>
    <property type="match status" value="1"/>
</dbReference>
<dbReference type="PANTHER" id="PTHR42829">
    <property type="entry name" value="NADH-UBIQUINONE OXIDOREDUCTASE CHAIN 5"/>
    <property type="match status" value="1"/>
</dbReference>
<dbReference type="PANTHER" id="PTHR42829:SF2">
    <property type="entry name" value="NADH-UBIQUINONE OXIDOREDUCTASE CHAIN 5"/>
    <property type="match status" value="1"/>
</dbReference>
<dbReference type="Pfam" id="PF01010">
    <property type="entry name" value="Proton_antipo_C"/>
    <property type="match status" value="1"/>
</dbReference>
<dbReference type="Pfam" id="PF00361">
    <property type="entry name" value="Proton_antipo_M"/>
    <property type="match status" value="1"/>
</dbReference>
<dbReference type="Pfam" id="PF00662">
    <property type="entry name" value="Proton_antipo_N"/>
    <property type="match status" value="1"/>
</dbReference>
<dbReference type="PRINTS" id="PR01434">
    <property type="entry name" value="NADHDHGNASE5"/>
</dbReference>
<dbReference type="PRINTS" id="PR01435">
    <property type="entry name" value="NPOXDRDTASE5"/>
</dbReference>
<accession>Q31952</accession>
<comment type="function">
    <text evidence="1">NDH shuttles electrons from NAD(P)H:plastoquinone, via FMN and iron-sulfur (Fe-S) centers, to quinones in the photosynthetic chain and possibly in a chloroplast respiratory chain. The immediate electron acceptor for the enzyme in this species is believed to be plastoquinone. Couples the redox reaction to proton translocation, and thus conserves the redox energy in a proton gradient (By similarity).</text>
</comment>
<comment type="catalytic activity">
    <reaction>
        <text>a plastoquinone + NADH + (n+1) H(+)(in) = a plastoquinol + NAD(+) + n H(+)(out)</text>
        <dbReference type="Rhea" id="RHEA:42608"/>
        <dbReference type="Rhea" id="RHEA-COMP:9561"/>
        <dbReference type="Rhea" id="RHEA-COMP:9562"/>
        <dbReference type="ChEBI" id="CHEBI:15378"/>
        <dbReference type="ChEBI" id="CHEBI:17757"/>
        <dbReference type="ChEBI" id="CHEBI:57540"/>
        <dbReference type="ChEBI" id="CHEBI:57945"/>
        <dbReference type="ChEBI" id="CHEBI:62192"/>
    </reaction>
</comment>
<comment type="catalytic activity">
    <reaction>
        <text>a plastoquinone + NADPH + (n+1) H(+)(in) = a plastoquinol + NADP(+) + n H(+)(out)</text>
        <dbReference type="Rhea" id="RHEA:42612"/>
        <dbReference type="Rhea" id="RHEA-COMP:9561"/>
        <dbReference type="Rhea" id="RHEA-COMP:9562"/>
        <dbReference type="ChEBI" id="CHEBI:15378"/>
        <dbReference type="ChEBI" id="CHEBI:17757"/>
        <dbReference type="ChEBI" id="CHEBI:57783"/>
        <dbReference type="ChEBI" id="CHEBI:58349"/>
        <dbReference type="ChEBI" id="CHEBI:62192"/>
    </reaction>
</comment>
<comment type="subunit">
    <text evidence="1">NDH is composed of at least 16 different subunits, 5 of which are encoded in the nucleus.</text>
</comment>
<comment type="subcellular location">
    <subcellularLocation>
        <location evidence="1">Plastid</location>
        <location evidence="1">Chloroplast thylakoid membrane</location>
        <topology evidence="1">Multi-pass membrane protein</topology>
    </subcellularLocation>
</comment>
<comment type="similarity">
    <text evidence="3">Belongs to the complex I subunit 5 family.</text>
</comment>
<gene>
    <name type="primary">ndhF</name>
</gene>
<organism>
    <name type="scientific">Capsicum baccatum</name>
    <name type="common">Peruvian pepper</name>
    <dbReference type="NCBI Taxonomy" id="33114"/>
    <lineage>
        <taxon>Eukaryota</taxon>
        <taxon>Viridiplantae</taxon>
        <taxon>Streptophyta</taxon>
        <taxon>Embryophyta</taxon>
        <taxon>Tracheophyta</taxon>
        <taxon>Spermatophyta</taxon>
        <taxon>Magnoliopsida</taxon>
        <taxon>eudicotyledons</taxon>
        <taxon>Gunneridae</taxon>
        <taxon>Pentapetalae</taxon>
        <taxon>asterids</taxon>
        <taxon>lamiids</taxon>
        <taxon>Solanales</taxon>
        <taxon>Solanaceae</taxon>
        <taxon>Solanoideae</taxon>
        <taxon>Capsiceae</taxon>
        <taxon>Capsicum</taxon>
    </lineage>
</organism>
<protein>
    <recommendedName>
        <fullName>NAD(P)H-quinone oxidoreductase subunit 5, chloroplastic</fullName>
        <ecNumber>7.1.1.-</ecNumber>
    </recommendedName>
    <alternativeName>
        <fullName>NAD(P)H dehydrogenase subunit 5</fullName>
    </alternativeName>
    <alternativeName>
        <fullName>NADH-plastoquinone oxidoreductase subunit 5</fullName>
    </alternativeName>
</protein>
<geneLocation type="chloroplast"/>
<feature type="chain" id="PRO_0000118177" description="NAD(P)H-quinone oxidoreductase subunit 5, chloroplastic">
    <location>
        <begin position="1" status="less than"/>
        <end position="695" status="greater than"/>
    </location>
</feature>
<feature type="transmembrane region" description="Helical" evidence="2">
    <location>
        <begin position="1"/>
        <end position="21"/>
    </location>
</feature>
<feature type="transmembrane region" description="Helical" evidence="2">
    <location>
        <begin position="32"/>
        <end position="52"/>
    </location>
</feature>
<feature type="transmembrane region" description="Helical" evidence="2">
    <location>
        <begin position="81"/>
        <end position="101"/>
    </location>
</feature>
<feature type="transmembrane region" description="Helical" evidence="2">
    <location>
        <begin position="117"/>
        <end position="137"/>
    </location>
</feature>
<feature type="transmembrane region" description="Helical" evidence="2">
    <location>
        <begin position="139"/>
        <end position="159"/>
    </location>
</feature>
<feature type="transmembrane region" description="Helical" evidence="2">
    <location>
        <begin position="177"/>
        <end position="197"/>
    </location>
</feature>
<feature type="transmembrane region" description="Helical" evidence="2">
    <location>
        <begin position="211"/>
        <end position="231"/>
    </location>
</feature>
<feature type="transmembrane region" description="Helical" evidence="2">
    <location>
        <begin position="250"/>
        <end position="270"/>
    </location>
</feature>
<feature type="transmembrane region" description="Helical" evidence="2">
    <location>
        <begin position="278"/>
        <end position="298"/>
    </location>
</feature>
<feature type="transmembrane region" description="Helical" evidence="2">
    <location>
        <begin position="319"/>
        <end position="339"/>
    </location>
</feature>
<feature type="transmembrane region" description="Helical" evidence="2">
    <location>
        <begin position="346"/>
        <end position="366"/>
    </location>
</feature>
<feature type="transmembrane region" description="Helical" evidence="2">
    <location>
        <begin position="388"/>
        <end position="408"/>
    </location>
</feature>
<feature type="transmembrane region" description="Helical" evidence="2">
    <location>
        <begin position="417"/>
        <end position="437"/>
    </location>
</feature>
<feature type="transmembrane region" description="Helical" evidence="2">
    <location>
        <begin position="535"/>
        <end position="555"/>
    </location>
</feature>
<feature type="transmembrane region" description="Helical" evidence="2">
    <location>
        <begin position="594"/>
        <end position="614"/>
    </location>
</feature>
<feature type="non-terminal residue">
    <location>
        <position position="1"/>
    </location>
</feature>
<feature type="non-terminal residue">
    <location>
        <position position="695"/>
    </location>
</feature>
<reference key="1">
    <citation type="journal article" date="1994" name="Syst. Biol.">
        <title>Combining data in phylogenetic systematics: an empirical approach using three molecular data sets in the Solanaceae.</title>
        <authorList>
            <person name="Olmstead R.G."/>
            <person name="Sweere J.A."/>
        </authorList>
    </citation>
    <scope>NUCLEOTIDE SEQUENCE [GENOMIC DNA]</scope>
</reference>
<proteinExistence type="inferred from homology"/>